<reference key="1">
    <citation type="journal article" date="2004" name="Proc. Natl. Acad. Sci. U.S.A.">
        <title>Insights into the evolution of Yersinia pestis through whole-genome comparison with Yersinia pseudotuberculosis.</title>
        <authorList>
            <person name="Chain P.S.G."/>
            <person name="Carniel E."/>
            <person name="Larimer F.W."/>
            <person name="Lamerdin J."/>
            <person name="Stoutland P.O."/>
            <person name="Regala W.M."/>
            <person name="Georgescu A.M."/>
            <person name="Vergez L.M."/>
            <person name="Land M.L."/>
            <person name="Motin V.L."/>
            <person name="Brubaker R.R."/>
            <person name="Fowler J."/>
            <person name="Hinnebusch J."/>
            <person name="Marceau M."/>
            <person name="Medigue C."/>
            <person name="Simonet M."/>
            <person name="Chenal-Francisque V."/>
            <person name="Souza B."/>
            <person name="Dacheux D."/>
            <person name="Elliott J.M."/>
            <person name="Derbise A."/>
            <person name="Hauser L.J."/>
            <person name="Garcia E."/>
        </authorList>
    </citation>
    <scope>NUCLEOTIDE SEQUENCE [LARGE SCALE GENOMIC DNA]</scope>
    <source>
        <strain>IP32953</strain>
    </source>
</reference>
<sequence>MKQLTILGSTGSIGNSTLSVVRANPELFKVTALVAGRNVREMAQQCLEFSPRYAAMSDEHSAKSLRLLLAEQGSDTEVYSGETAACELAALDDVDQVMAAIVGIAGLPSTLAAIRAGKQVLLANKESLITCGKLFMDEVKRSRAQLLPIDSEHNAIFQSLPERIQRQLGYSSLNENGVSRIILTGSGGPFRETPLSQFSDVTPDQACAHPNWSMGRKISVDSATMMNKGLEYVEARWLFNASAEQIEVVLHPQSVIHSMVRYHDGSILAQMGTPDMRTPIAHAMAYPMRVSSGVAPLDFCKVGALTFTTPDYQRYPCLKLAIDACNAGQAATTALNAANEISVMAFLDSKIRFTDIEVINRTVVEGLLLSEPTSVEEVLVIDRKARDVAAQVIAKLNN</sequence>
<dbReference type="EC" id="1.1.1.267" evidence="1"/>
<dbReference type="EMBL" id="BX936398">
    <property type="protein sequence ID" value="CAH22237.1"/>
    <property type="molecule type" value="Genomic_DNA"/>
</dbReference>
<dbReference type="RefSeq" id="WP_011192861.1">
    <property type="nucleotide sequence ID" value="NC_006155.1"/>
</dbReference>
<dbReference type="SMR" id="Q667J3"/>
<dbReference type="GeneID" id="49784982"/>
<dbReference type="KEGG" id="ypo:BZ17_3622"/>
<dbReference type="KEGG" id="yps:YPTB2999"/>
<dbReference type="PATRIC" id="fig|273123.14.peg.3802"/>
<dbReference type="UniPathway" id="UPA00056">
    <property type="reaction ID" value="UER00092"/>
</dbReference>
<dbReference type="Proteomes" id="UP000001011">
    <property type="component" value="Chromosome"/>
</dbReference>
<dbReference type="GO" id="GO:0030604">
    <property type="term" value="F:1-deoxy-D-xylulose-5-phosphate reductoisomerase activity"/>
    <property type="evidence" value="ECO:0007669"/>
    <property type="project" value="UniProtKB-UniRule"/>
</dbReference>
<dbReference type="GO" id="GO:0030145">
    <property type="term" value="F:manganese ion binding"/>
    <property type="evidence" value="ECO:0007669"/>
    <property type="project" value="TreeGrafter"/>
</dbReference>
<dbReference type="GO" id="GO:0070402">
    <property type="term" value="F:NADPH binding"/>
    <property type="evidence" value="ECO:0007669"/>
    <property type="project" value="InterPro"/>
</dbReference>
<dbReference type="GO" id="GO:0051484">
    <property type="term" value="P:isopentenyl diphosphate biosynthetic process, methylerythritol 4-phosphate pathway involved in terpenoid biosynthetic process"/>
    <property type="evidence" value="ECO:0007669"/>
    <property type="project" value="TreeGrafter"/>
</dbReference>
<dbReference type="FunFam" id="1.10.1740.10:FF:000004">
    <property type="entry name" value="1-deoxy-D-xylulose 5-phosphate reductoisomerase"/>
    <property type="match status" value="1"/>
</dbReference>
<dbReference type="FunFam" id="3.40.50.720:FF:000045">
    <property type="entry name" value="1-deoxy-D-xylulose 5-phosphate reductoisomerase"/>
    <property type="match status" value="1"/>
</dbReference>
<dbReference type="Gene3D" id="1.10.1740.10">
    <property type="match status" value="1"/>
</dbReference>
<dbReference type="Gene3D" id="3.40.50.720">
    <property type="entry name" value="NAD(P)-binding Rossmann-like Domain"/>
    <property type="match status" value="1"/>
</dbReference>
<dbReference type="HAMAP" id="MF_00183">
    <property type="entry name" value="DXP_reductoisom"/>
    <property type="match status" value="1"/>
</dbReference>
<dbReference type="InterPro" id="IPR003821">
    <property type="entry name" value="DXP_reductoisomerase"/>
</dbReference>
<dbReference type="InterPro" id="IPR013644">
    <property type="entry name" value="DXP_reductoisomerase_C"/>
</dbReference>
<dbReference type="InterPro" id="IPR013512">
    <property type="entry name" value="DXP_reductoisomerase_N"/>
</dbReference>
<dbReference type="InterPro" id="IPR026877">
    <property type="entry name" value="DXPR_C"/>
</dbReference>
<dbReference type="InterPro" id="IPR036169">
    <property type="entry name" value="DXPR_C_sf"/>
</dbReference>
<dbReference type="InterPro" id="IPR036291">
    <property type="entry name" value="NAD(P)-bd_dom_sf"/>
</dbReference>
<dbReference type="NCBIfam" id="TIGR00243">
    <property type="entry name" value="Dxr"/>
    <property type="match status" value="1"/>
</dbReference>
<dbReference type="NCBIfam" id="NF003938">
    <property type="entry name" value="PRK05447.1-1"/>
    <property type="match status" value="1"/>
</dbReference>
<dbReference type="NCBIfam" id="NF009114">
    <property type="entry name" value="PRK12464.1"/>
    <property type="match status" value="1"/>
</dbReference>
<dbReference type="PANTHER" id="PTHR30525">
    <property type="entry name" value="1-DEOXY-D-XYLULOSE 5-PHOSPHATE REDUCTOISOMERASE"/>
    <property type="match status" value="1"/>
</dbReference>
<dbReference type="PANTHER" id="PTHR30525:SF0">
    <property type="entry name" value="1-DEOXY-D-XYLULOSE 5-PHOSPHATE REDUCTOISOMERASE, CHLOROPLASTIC"/>
    <property type="match status" value="1"/>
</dbReference>
<dbReference type="Pfam" id="PF08436">
    <property type="entry name" value="DXP_redisom_C"/>
    <property type="match status" value="1"/>
</dbReference>
<dbReference type="Pfam" id="PF02670">
    <property type="entry name" value="DXP_reductoisom"/>
    <property type="match status" value="1"/>
</dbReference>
<dbReference type="Pfam" id="PF13288">
    <property type="entry name" value="DXPR_C"/>
    <property type="match status" value="1"/>
</dbReference>
<dbReference type="PIRSF" id="PIRSF006205">
    <property type="entry name" value="Dxp_reductismrs"/>
    <property type="match status" value="1"/>
</dbReference>
<dbReference type="SUPFAM" id="SSF69055">
    <property type="entry name" value="1-deoxy-D-xylulose-5-phosphate reductoisomerase, C-terminal domain"/>
    <property type="match status" value="1"/>
</dbReference>
<dbReference type="SUPFAM" id="SSF55347">
    <property type="entry name" value="Glyceraldehyde-3-phosphate dehydrogenase-like, C-terminal domain"/>
    <property type="match status" value="1"/>
</dbReference>
<dbReference type="SUPFAM" id="SSF51735">
    <property type="entry name" value="NAD(P)-binding Rossmann-fold domains"/>
    <property type="match status" value="1"/>
</dbReference>
<accession>Q667J3</accession>
<gene>
    <name evidence="1" type="primary">dxr</name>
    <name type="ordered locus">YPTB2999</name>
</gene>
<organism>
    <name type="scientific">Yersinia pseudotuberculosis serotype I (strain IP32953)</name>
    <dbReference type="NCBI Taxonomy" id="273123"/>
    <lineage>
        <taxon>Bacteria</taxon>
        <taxon>Pseudomonadati</taxon>
        <taxon>Pseudomonadota</taxon>
        <taxon>Gammaproteobacteria</taxon>
        <taxon>Enterobacterales</taxon>
        <taxon>Yersiniaceae</taxon>
        <taxon>Yersinia</taxon>
    </lineage>
</organism>
<name>DXR_YERPS</name>
<feature type="chain" id="PRO_0000163746" description="1-deoxy-D-xylulose 5-phosphate reductoisomerase">
    <location>
        <begin position="1"/>
        <end position="398"/>
    </location>
</feature>
<feature type="binding site" evidence="1">
    <location>
        <position position="10"/>
    </location>
    <ligand>
        <name>NADPH</name>
        <dbReference type="ChEBI" id="CHEBI:57783"/>
    </ligand>
</feature>
<feature type="binding site" evidence="1">
    <location>
        <position position="11"/>
    </location>
    <ligand>
        <name>NADPH</name>
        <dbReference type="ChEBI" id="CHEBI:57783"/>
    </ligand>
</feature>
<feature type="binding site" evidence="1">
    <location>
        <position position="12"/>
    </location>
    <ligand>
        <name>NADPH</name>
        <dbReference type="ChEBI" id="CHEBI:57783"/>
    </ligand>
</feature>
<feature type="binding site" evidence="1">
    <location>
        <position position="13"/>
    </location>
    <ligand>
        <name>NADPH</name>
        <dbReference type="ChEBI" id="CHEBI:57783"/>
    </ligand>
</feature>
<feature type="binding site" evidence="1">
    <location>
        <position position="36"/>
    </location>
    <ligand>
        <name>NADPH</name>
        <dbReference type="ChEBI" id="CHEBI:57783"/>
    </ligand>
</feature>
<feature type="binding site" evidence="1">
    <location>
        <position position="37"/>
    </location>
    <ligand>
        <name>NADPH</name>
        <dbReference type="ChEBI" id="CHEBI:57783"/>
    </ligand>
</feature>
<feature type="binding site" evidence="1">
    <location>
        <position position="38"/>
    </location>
    <ligand>
        <name>NADPH</name>
        <dbReference type="ChEBI" id="CHEBI:57783"/>
    </ligand>
</feature>
<feature type="binding site" evidence="1">
    <location>
        <position position="124"/>
    </location>
    <ligand>
        <name>NADPH</name>
        <dbReference type="ChEBI" id="CHEBI:57783"/>
    </ligand>
</feature>
<feature type="binding site" evidence="1">
    <location>
        <position position="125"/>
    </location>
    <ligand>
        <name>1-deoxy-D-xylulose 5-phosphate</name>
        <dbReference type="ChEBI" id="CHEBI:57792"/>
    </ligand>
</feature>
<feature type="binding site" evidence="1">
    <location>
        <position position="126"/>
    </location>
    <ligand>
        <name>NADPH</name>
        <dbReference type="ChEBI" id="CHEBI:57783"/>
    </ligand>
</feature>
<feature type="binding site" evidence="1">
    <location>
        <position position="150"/>
    </location>
    <ligand>
        <name>Mn(2+)</name>
        <dbReference type="ChEBI" id="CHEBI:29035"/>
    </ligand>
</feature>
<feature type="binding site" evidence="1">
    <location>
        <position position="151"/>
    </location>
    <ligand>
        <name>1-deoxy-D-xylulose 5-phosphate</name>
        <dbReference type="ChEBI" id="CHEBI:57792"/>
    </ligand>
</feature>
<feature type="binding site" evidence="1">
    <location>
        <position position="152"/>
    </location>
    <ligand>
        <name>1-deoxy-D-xylulose 5-phosphate</name>
        <dbReference type="ChEBI" id="CHEBI:57792"/>
    </ligand>
</feature>
<feature type="binding site" evidence="1">
    <location>
        <position position="152"/>
    </location>
    <ligand>
        <name>Mn(2+)</name>
        <dbReference type="ChEBI" id="CHEBI:29035"/>
    </ligand>
</feature>
<feature type="binding site" evidence="1">
    <location>
        <position position="186"/>
    </location>
    <ligand>
        <name>1-deoxy-D-xylulose 5-phosphate</name>
        <dbReference type="ChEBI" id="CHEBI:57792"/>
    </ligand>
</feature>
<feature type="binding site" evidence="1">
    <location>
        <position position="209"/>
    </location>
    <ligand>
        <name>1-deoxy-D-xylulose 5-phosphate</name>
        <dbReference type="ChEBI" id="CHEBI:57792"/>
    </ligand>
</feature>
<feature type="binding site" evidence="1">
    <location>
        <position position="215"/>
    </location>
    <ligand>
        <name>NADPH</name>
        <dbReference type="ChEBI" id="CHEBI:57783"/>
    </ligand>
</feature>
<feature type="binding site" evidence="1">
    <location>
        <position position="222"/>
    </location>
    <ligand>
        <name>1-deoxy-D-xylulose 5-phosphate</name>
        <dbReference type="ChEBI" id="CHEBI:57792"/>
    </ligand>
</feature>
<feature type="binding site" evidence="1">
    <location>
        <position position="227"/>
    </location>
    <ligand>
        <name>1-deoxy-D-xylulose 5-phosphate</name>
        <dbReference type="ChEBI" id="CHEBI:57792"/>
    </ligand>
</feature>
<feature type="binding site" evidence="1">
    <location>
        <position position="228"/>
    </location>
    <ligand>
        <name>1-deoxy-D-xylulose 5-phosphate</name>
        <dbReference type="ChEBI" id="CHEBI:57792"/>
    </ligand>
</feature>
<feature type="binding site" evidence="1">
    <location>
        <position position="231"/>
    </location>
    <ligand>
        <name>1-deoxy-D-xylulose 5-phosphate</name>
        <dbReference type="ChEBI" id="CHEBI:57792"/>
    </ligand>
</feature>
<feature type="binding site" evidence="1">
    <location>
        <position position="231"/>
    </location>
    <ligand>
        <name>Mn(2+)</name>
        <dbReference type="ChEBI" id="CHEBI:29035"/>
    </ligand>
</feature>
<keyword id="KW-0414">Isoprene biosynthesis</keyword>
<keyword id="KW-0464">Manganese</keyword>
<keyword id="KW-0479">Metal-binding</keyword>
<keyword id="KW-0521">NADP</keyword>
<keyword id="KW-0560">Oxidoreductase</keyword>
<evidence type="ECO:0000255" key="1">
    <source>
        <dbReference type="HAMAP-Rule" id="MF_00183"/>
    </source>
</evidence>
<comment type="function">
    <text evidence="1">Catalyzes the NADPH-dependent rearrangement and reduction of 1-deoxy-D-xylulose-5-phosphate (DXP) to 2-C-methyl-D-erythritol 4-phosphate (MEP).</text>
</comment>
<comment type="catalytic activity">
    <reaction evidence="1">
        <text>2-C-methyl-D-erythritol 4-phosphate + NADP(+) = 1-deoxy-D-xylulose 5-phosphate + NADPH + H(+)</text>
        <dbReference type="Rhea" id="RHEA:13717"/>
        <dbReference type="ChEBI" id="CHEBI:15378"/>
        <dbReference type="ChEBI" id="CHEBI:57783"/>
        <dbReference type="ChEBI" id="CHEBI:57792"/>
        <dbReference type="ChEBI" id="CHEBI:58262"/>
        <dbReference type="ChEBI" id="CHEBI:58349"/>
        <dbReference type="EC" id="1.1.1.267"/>
    </reaction>
    <physiologicalReaction direction="right-to-left" evidence="1">
        <dbReference type="Rhea" id="RHEA:13719"/>
    </physiologicalReaction>
</comment>
<comment type="cofactor">
    <cofactor evidence="1">
        <name>Mg(2+)</name>
        <dbReference type="ChEBI" id="CHEBI:18420"/>
    </cofactor>
    <cofactor evidence="1">
        <name>Mn(2+)</name>
        <dbReference type="ChEBI" id="CHEBI:29035"/>
    </cofactor>
</comment>
<comment type="pathway">
    <text evidence="1">Isoprenoid biosynthesis; isopentenyl diphosphate biosynthesis via DXP pathway; isopentenyl diphosphate from 1-deoxy-D-xylulose 5-phosphate: step 1/6.</text>
</comment>
<comment type="subunit">
    <text evidence="1">Homodimer.</text>
</comment>
<comment type="similarity">
    <text evidence="1">Belongs to the DXR family.</text>
</comment>
<protein>
    <recommendedName>
        <fullName evidence="1">1-deoxy-D-xylulose 5-phosphate reductoisomerase</fullName>
        <shortName evidence="1">DXP reductoisomerase</shortName>
        <ecNumber evidence="1">1.1.1.267</ecNumber>
    </recommendedName>
    <alternativeName>
        <fullName evidence="1">1-deoxyxylulose-5-phosphate reductoisomerase</fullName>
    </alternativeName>
    <alternativeName>
        <fullName evidence="1">2-C-methyl-D-erythritol 4-phosphate synthase</fullName>
    </alternativeName>
</protein>
<proteinExistence type="inferred from homology"/>